<gene>
    <name type="primary">GADD45A</name>
    <name type="synonym">DDIT1</name>
    <name type="synonym">GADD45</name>
</gene>
<dbReference type="EMBL" id="M60973">
    <property type="protein sequence ID" value="AAA36984.1"/>
    <property type="molecule type" value="mRNA"/>
</dbReference>
<dbReference type="EMBL" id="L25339">
    <property type="protein sequence ID" value="AAA62760.1"/>
    <property type="molecule type" value="Genomic_DNA"/>
</dbReference>
<dbReference type="PIR" id="I48111">
    <property type="entry name" value="I48111"/>
</dbReference>
<dbReference type="SMR" id="P24523"/>
<dbReference type="PaxDb" id="10029-XP_007607467.1"/>
<dbReference type="Ensembl" id="ENSCGRT00001029383.1">
    <property type="protein sequence ID" value="ENSCGRP00001025137.1"/>
    <property type="gene ID" value="ENSCGRG00001022826.1"/>
</dbReference>
<dbReference type="eggNOG" id="ENOG502RY8P">
    <property type="taxonomic scope" value="Eukaryota"/>
</dbReference>
<dbReference type="GeneTree" id="ENSGT00950000182964"/>
<dbReference type="OrthoDB" id="5976967at2759"/>
<dbReference type="Proteomes" id="UP000694386">
    <property type="component" value="Unplaced"/>
</dbReference>
<dbReference type="Proteomes" id="UP001108280">
    <property type="component" value="Unplaced"/>
</dbReference>
<dbReference type="GO" id="GO:0005737">
    <property type="term" value="C:cytoplasm"/>
    <property type="evidence" value="ECO:0007669"/>
    <property type="project" value="Ensembl"/>
</dbReference>
<dbReference type="GO" id="GO:0016607">
    <property type="term" value="C:nuclear speck"/>
    <property type="evidence" value="ECO:0007669"/>
    <property type="project" value="Ensembl"/>
</dbReference>
<dbReference type="GO" id="GO:0019900">
    <property type="term" value="F:kinase binding"/>
    <property type="evidence" value="ECO:0007669"/>
    <property type="project" value="Ensembl"/>
</dbReference>
<dbReference type="GO" id="GO:1990841">
    <property type="term" value="F:promoter-specific chromatin binding"/>
    <property type="evidence" value="ECO:0007669"/>
    <property type="project" value="Ensembl"/>
</dbReference>
<dbReference type="GO" id="GO:0046982">
    <property type="term" value="F:protein heterodimerization activity"/>
    <property type="evidence" value="ECO:0007669"/>
    <property type="project" value="Ensembl"/>
</dbReference>
<dbReference type="GO" id="GO:0042803">
    <property type="term" value="F:protein homodimerization activity"/>
    <property type="evidence" value="ECO:0007669"/>
    <property type="project" value="Ensembl"/>
</dbReference>
<dbReference type="GO" id="GO:0071479">
    <property type="term" value="P:cellular response to ionizing radiation"/>
    <property type="evidence" value="ECO:0007669"/>
    <property type="project" value="Ensembl"/>
</dbReference>
<dbReference type="GO" id="GO:0071260">
    <property type="term" value="P:cellular response to mechanical stimulus"/>
    <property type="evidence" value="ECO:0007669"/>
    <property type="project" value="Ensembl"/>
</dbReference>
<dbReference type="GO" id="GO:0007098">
    <property type="term" value="P:centrosome cycle"/>
    <property type="evidence" value="ECO:0007669"/>
    <property type="project" value="Ensembl"/>
</dbReference>
<dbReference type="GO" id="GO:0016525">
    <property type="term" value="P:negative regulation of angiogenesis"/>
    <property type="evidence" value="ECO:0007669"/>
    <property type="project" value="Ensembl"/>
</dbReference>
<dbReference type="GO" id="GO:0043537">
    <property type="term" value="P:negative regulation of blood vessel endothelial cell migration"/>
    <property type="evidence" value="ECO:0007669"/>
    <property type="project" value="Ensembl"/>
</dbReference>
<dbReference type="GO" id="GO:0000122">
    <property type="term" value="P:negative regulation of transcription by RNA polymerase II"/>
    <property type="evidence" value="ECO:0007669"/>
    <property type="project" value="Ensembl"/>
</dbReference>
<dbReference type="GO" id="GO:0043065">
    <property type="term" value="P:positive regulation of apoptotic process"/>
    <property type="evidence" value="ECO:0007669"/>
    <property type="project" value="Ensembl"/>
</dbReference>
<dbReference type="GO" id="GO:0046330">
    <property type="term" value="P:positive regulation of JNK cascade"/>
    <property type="evidence" value="ECO:0007669"/>
    <property type="project" value="Ensembl"/>
</dbReference>
<dbReference type="GO" id="GO:1900745">
    <property type="term" value="P:positive regulation of p38MAPK cascade"/>
    <property type="evidence" value="ECO:0007669"/>
    <property type="project" value="Ensembl"/>
</dbReference>
<dbReference type="GO" id="GO:2000379">
    <property type="term" value="P:positive regulation of reactive oxygen species metabolic process"/>
    <property type="evidence" value="ECO:0007669"/>
    <property type="project" value="Ensembl"/>
</dbReference>
<dbReference type="GO" id="GO:0051726">
    <property type="term" value="P:regulation of cell cycle"/>
    <property type="evidence" value="ECO:0007669"/>
    <property type="project" value="UniProtKB-KW"/>
</dbReference>
<dbReference type="GO" id="GO:0042770">
    <property type="term" value="P:signal transduction in response to DNA damage"/>
    <property type="evidence" value="ECO:0007669"/>
    <property type="project" value="Ensembl"/>
</dbReference>
<dbReference type="FunFam" id="3.30.1330.30:FF:000012">
    <property type="entry name" value="growth arrest and DNA damage-inducible protein GADD45 alpha"/>
    <property type="match status" value="1"/>
</dbReference>
<dbReference type="Gene3D" id="3.30.1330.30">
    <property type="match status" value="1"/>
</dbReference>
<dbReference type="InterPro" id="IPR024824">
    <property type="entry name" value="GADD45"/>
</dbReference>
<dbReference type="InterPro" id="IPR029064">
    <property type="entry name" value="Ribosomal_eL30-like_sf"/>
</dbReference>
<dbReference type="InterPro" id="IPR004038">
    <property type="entry name" value="Ribosomal_eL8/eL30/eS12/Gad45"/>
</dbReference>
<dbReference type="PANTHER" id="PTHR10411">
    <property type="entry name" value="GROWTH ARREST AND DNA DAMAGE-INDUCIBLE PROTEIN GADD45"/>
    <property type="match status" value="1"/>
</dbReference>
<dbReference type="PANTHER" id="PTHR10411:SF3">
    <property type="entry name" value="GROWTH ARREST AND DNA DAMAGE-INDUCIBLE PROTEIN GADD45 ALPHA"/>
    <property type="match status" value="1"/>
</dbReference>
<dbReference type="Pfam" id="PF01248">
    <property type="entry name" value="Ribosomal_L7Ae"/>
    <property type="match status" value="1"/>
</dbReference>
<dbReference type="SUPFAM" id="SSF55315">
    <property type="entry name" value="L30e-like"/>
    <property type="match status" value="1"/>
</dbReference>
<organism>
    <name type="scientific">Cricetulus griseus</name>
    <name type="common">Chinese hamster</name>
    <name type="synonym">Cricetulus barabensis griseus</name>
    <dbReference type="NCBI Taxonomy" id="10029"/>
    <lineage>
        <taxon>Eukaryota</taxon>
        <taxon>Metazoa</taxon>
        <taxon>Chordata</taxon>
        <taxon>Craniata</taxon>
        <taxon>Vertebrata</taxon>
        <taxon>Euteleostomi</taxon>
        <taxon>Mammalia</taxon>
        <taxon>Eutheria</taxon>
        <taxon>Euarchontoglires</taxon>
        <taxon>Glires</taxon>
        <taxon>Rodentia</taxon>
        <taxon>Myomorpha</taxon>
        <taxon>Muroidea</taxon>
        <taxon>Cricetidae</taxon>
        <taxon>Cricetinae</taxon>
        <taxon>Cricetulus</taxon>
    </lineage>
</organism>
<keyword id="KW-0131">Cell cycle</keyword>
<keyword id="KW-0227">DNA damage</keyword>
<keyword id="KW-0338">Growth arrest</keyword>
<keyword id="KW-0539">Nucleus</keyword>
<keyword id="KW-0597">Phosphoprotein</keyword>
<accession>P24523</accession>
<reference key="1">
    <citation type="journal article" date="1991" name="Mol. Cell. Biol.">
        <title>Induction by ionizing radiation of the gadd45 gene in cultured human cells: lack of mediation by protein kinase C.</title>
        <authorList>
            <person name="Papathanasiou M.A."/>
            <person name="Kerr N.C.K."/>
            <person name="Robbins J.H."/>
            <person name="McBride O.W."/>
            <person name="Alamo I. Jr."/>
            <person name="Barrett S.F."/>
            <person name="Hickson I.D."/>
            <person name="Fornace A.J. Jr."/>
        </authorList>
    </citation>
    <scope>NUCLEOTIDE SEQUENCE [MRNA]</scope>
    <scope>INDUCTION</scope>
</reference>
<reference key="2">
    <citation type="journal article" date="1993" name="J. Biol. Chem.">
        <title>Analysis of the mammalian gadd45 gene and its response to DNA damage.</title>
        <authorList>
            <person name="Hollander M.C."/>
            <person name="Alamo I. Jr."/>
            <person name="Jackman J."/>
            <person name="Wang M.G."/>
            <person name="McBride O.W."/>
            <person name="Fornace A.J. Jr."/>
        </authorList>
    </citation>
    <scope>NUCLEOTIDE SEQUENCE [GENOMIC DNA]</scope>
    <source>
        <tissue>Ovary</tissue>
    </source>
</reference>
<proteinExistence type="evidence at transcript level"/>
<comment type="function">
    <text evidence="1">Might affect PCNA interaction with some CDK (cell division protein kinase) complexes; stimulates DNA excision repair in vitro and inhibits entry of cells into S phase. In T-cells, functions as a regulator of p38 MAPKs by inhibiting p88 phosphorylation and activity (By similarity).</text>
</comment>
<comment type="subunit">
    <text evidence="1">Interacts with AURKA, PCNA, GADD45GIP1 and MAPK14.</text>
</comment>
<comment type="subcellular location">
    <subcellularLocation>
        <location evidence="1">Nucleus</location>
    </subcellularLocation>
</comment>
<comment type="induction">
    <text evidence="3">By UV radiation, X-rays, growth arrest and alkylating agents. The induction is mediate by some kinase(s) other than PKC.</text>
</comment>
<comment type="similarity">
    <text evidence="4">Belongs to the GADD45 family.</text>
</comment>
<feature type="chain" id="PRO_0000148330" description="Growth arrest and DNA damage-inducible protein GADD45 alpha">
    <location>
        <begin position="1"/>
        <end position="165"/>
    </location>
</feature>
<feature type="modified residue" description="Phosphothreonine" evidence="2">
    <location>
        <position position="2"/>
    </location>
</feature>
<sequence length="165" mass="18296">MTLEEFSAAEQKTERMDTVGDALEEVLSKARSQRTITVGVYEAAKLLNVDPDNVVLCLLAADEDDDRDVALQIHFTLIQAFCCENDINILRVSNPGRLAELLLLESDAGPAESGGASQPPDLHCVLVTNPHSSQWKDPALSQLICFCRESRYMDQWVPVINLPER</sequence>
<name>GA45A_CRIGR</name>
<evidence type="ECO:0000250" key="1"/>
<evidence type="ECO:0000250" key="2">
    <source>
        <dbReference type="UniProtKB" id="P24522"/>
    </source>
</evidence>
<evidence type="ECO:0000269" key="3">
    <source>
    </source>
</evidence>
<evidence type="ECO:0000305" key="4"/>
<protein>
    <recommendedName>
        <fullName>Growth arrest and DNA damage-inducible protein GADD45 alpha</fullName>
    </recommendedName>
    <alternativeName>
        <fullName>DNA damage-inducible transcript 1 protein</fullName>
        <shortName>DDIT-1</shortName>
    </alternativeName>
</protein>